<dbReference type="EC" id="6.3.4.5" evidence="1"/>
<dbReference type="EMBL" id="CP000555">
    <property type="protein sequence ID" value="ABM95988.1"/>
    <property type="molecule type" value="Genomic_DNA"/>
</dbReference>
<dbReference type="RefSeq" id="WP_011830611.1">
    <property type="nucleotide sequence ID" value="NC_008825.1"/>
</dbReference>
<dbReference type="SMR" id="A2SK99"/>
<dbReference type="STRING" id="420662.Mpe_A3035"/>
<dbReference type="KEGG" id="mpt:Mpe_A3035"/>
<dbReference type="eggNOG" id="COG0137">
    <property type="taxonomic scope" value="Bacteria"/>
</dbReference>
<dbReference type="HOGENOM" id="CLU_032784_4_1_4"/>
<dbReference type="UniPathway" id="UPA00068">
    <property type="reaction ID" value="UER00113"/>
</dbReference>
<dbReference type="Proteomes" id="UP000000366">
    <property type="component" value="Chromosome"/>
</dbReference>
<dbReference type="GO" id="GO:0005737">
    <property type="term" value="C:cytoplasm"/>
    <property type="evidence" value="ECO:0007669"/>
    <property type="project" value="UniProtKB-SubCell"/>
</dbReference>
<dbReference type="GO" id="GO:0004055">
    <property type="term" value="F:argininosuccinate synthase activity"/>
    <property type="evidence" value="ECO:0007669"/>
    <property type="project" value="UniProtKB-UniRule"/>
</dbReference>
<dbReference type="GO" id="GO:0005524">
    <property type="term" value="F:ATP binding"/>
    <property type="evidence" value="ECO:0007669"/>
    <property type="project" value="UniProtKB-UniRule"/>
</dbReference>
<dbReference type="GO" id="GO:0042803">
    <property type="term" value="F:protein homodimerization activity"/>
    <property type="evidence" value="ECO:0007669"/>
    <property type="project" value="InterPro"/>
</dbReference>
<dbReference type="GO" id="GO:0000053">
    <property type="term" value="P:argininosuccinate metabolic process"/>
    <property type="evidence" value="ECO:0007669"/>
    <property type="project" value="TreeGrafter"/>
</dbReference>
<dbReference type="GO" id="GO:0006526">
    <property type="term" value="P:L-arginine biosynthetic process"/>
    <property type="evidence" value="ECO:0007669"/>
    <property type="project" value="UniProtKB-UniRule"/>
</dbReference>
<dbReference type="GO" id="GO:0000050">
    <property type="term" value="P:urea cycle"/>
    <property type="evidence" value="ECO:0007669"/>
    <property type="project" value="TreeGrafter"/>
</dbReference>
<dbReference type="CDD" id="cd01999">
    <property type="entry name" value="ASS"/>
    <property type="match status" value="1"/>
</dbReference>
<dbReference type="FunFam" id="1.10.287.400:FF:000001">
    <property type="entry name" value="Argininosuccinate synthase"/>
    <property type="match status" value="1"/>
</dbReference>
<dbReference type="Gene3D" id="1.10.287.400">
    <property type="match status" value="1"/>
</dbReference>
<dbReference type="Gene3D" id="3.90.1260.10">
    <property type="entry name" value="Argininosuccinate synthetase, chain A, domain 2"/>
    <property type="match status" value="1"/>
</dbReference>
<dbReference type="Gene3D" id="3.40.50.620">
    <property type="entry name" value="HUPs"/>
    <property type="match status" value="1"/>
</dbReference>
<dbReference type="HAMAP" id="MF_00581">
    <property type="entry name" value="Arg_succ_synth_type2"/>
    <property type="match status" value="1"/>
</dbReference>
<dbReference type="InterPro" id="IPR023437">
    <property type="entry name" value="Arg_succ_synth_type2_subfam"/>
</dbReference>
<dbReference type="InterPro" id="IPR048268">
    <property type="entry name" value="Arginosuc_syn_C"/>
</dbReference>
<dbReference type="InterPro" id="IPR048267">
    <property type="entry name" value="Arginosuc_syn_N"/>
</dbReference>
<dbReference type="InterPro" id="IPR001518">
    <property type="entry name" value="Arginosuc_synth"/>
</dbReference>
<dbReference type="InterPro" id="IPR018223">
    <property type="entry name" value="Arginosuc_synth_CS"/>
</dbReference>
<dbReference type="InterPro" id="IPR023434">
    <property type="entry name" value="Arginosuc_synth_type_1_subfam"/>
</dbReference>
<dbReference type="InterPro" id="IPR024074">
    <property type="entry name" value="AS_cat/multimer_dom_body"/>
</dbReference>
<dbReference type="InterPro" id="IPR024073">
    <property type="entry name" value="AS_multimer_C_tail"/>
</dbReference>
<dbReference type="InterPro" id="IPR014729">
    <property type="entry name" value="Rossmann-like_a/b/a_fold"/>
</dbReference>
<dbReference type="NCBIfam" id="TIGR00032">
    <property type="entry name" value="argG"/>
    <property type="match status" value="1"/>
</dbReference>
<dbReference type="NCBIfam" id="NF003779">
    <property type="entry name" value="PRK05370.1"/>
    <property type="match status" value="1"/>
</dbReference>
<dbReference type="PANTHER" id="PTHR11587">
    <property type="entry name" value="ARGININOSUCCINATE SYNTHASE"/>
    <property type="match status" value="1"/>
</dbReference>
<dbReference type="PANTHER" id="PTHR11587:SF2">
    <property type="entry name" value="ARGININOSUCCINATE SYNTHASE"/>
    <property type="match status" value="1"/>
</dbReference>
<dbReference type="Pfam" id="PF20979">
    <property type="entry name" value="Arginosuc_syn_C"/>
    <property type="match status" value="1"/>
</dbReference>
<dbReference type="Pfam" id="PF00764">
    <property type="entry name" value="Arginosuc_synth"/>
    <property type="match status" value="1"/>
</dbReference>
<dbReference type="SUPFAM" id="SSF52402">
    <property type="entry name" value="Adenine nucleotide alpha hydrolases-like"/>
    <property type="match status" value="1"/>
</dbReference>
<dbReference type="SUPFAM" id="SSF69864">
    <property type="entry name" value="Argininosuccinate synthetase, C-terminal domain"/>
    <property type="match status" value="1"/>
</dbReference>
<dbReference type="PROSITE" id="PS00564">
    <property type="entry name" value="ARGININOSUCCIN_SYN_1"/>
    <property type="match status" value="1"/>
</dbReference>
<dbReference type="PROSITE" id="PS00565">
    <property type="entry name" value="ARGININOSUCCIN_SYN_2"/>
    <property type="match status" value="1"/>
</dbReference>
<name>ASSY_METPP</name>
<proteinExistence type="inferred from homology"/>
<organism>
    <name type="scientific">Methylibium petroleiphilum (strain ATCC BAA-1232 / LMG 22953 / PM1)</name>
    <dbReference type="NCBI Taxonomy" id="420662"/>
    <lineage>
        <taxon>Bacteria</taxon>
        <taxon>Pseudomonadati</taxon>
        <taxon>Pseudomonadota</taxon>
        <taxon>Betaproteobacteria</taxon>
        <taxon>Burkholderiales</taxon>
        <taxon>Sphaerotilaceae</taxon>
        <taxon>Methylibium</taxon>
    </lineage>
</organism>
<gene>
    <name evidence="1" type="primary">argG</name>
    <name type="ordered locus">Mpe_A3035</name>
</gene>
<evidence type="ECO:0000255" key="1">
    <source>
        <dbReference type="HAMAP-Rule" id="MF_00581"/>
    </source>
</evidence>
<feature type="chain" id="PRO_1000025432" description="Argininosuccinate synthase">
    <location>
        <begin position="1"/>
        <end position="446"/>
    </location>
</feature>
<feature type="binding site" evidence="1">
    <location>
        <begin position="17"/>
        <end position="25"/>
    </location>
    <ligand>
        <name>ATP</name>
        <dbReference type="ChEBI" id="CHEBI:30616"/>
    </ligand>
</feature>
<feature type="binding site" evidence="1">
    <location>
        <position position="43"/>
    </location>
    <ligand>
        <name>ATP</name>
        <dbReference type="ChEBI" id="CHEBI:30616"/>
    </ligand>
</feature>
<feature type="binding site" evidence="1">
    <location>
        <position position="99"/>
    </location>
    <ligand>
        <name>L-citrulline</name>
        <dbReference type="ChEBI" id="CHEBI:57743"/>
    </ligand>
</feature>
<feature type="binding site" evidence="1">
    <location>
        <position position="129"/>
    </location>
    <ligand>
        <name>ATP</name>
        <dbReference type="ChEBI" id="CHEBI:30616"/>
    </ligand>
</feature>
<feature type="binding site" evidence="1">
    <location>
        <position position="131"/>
    </location>
    <ligand>
        <name>ATP</name>
        <dbReference type="ChEBI" id="CHEBI:30616"/>
    </ligand>
</feature>
<feature type="binding site" evidence="1">
    <location>
        <position position="131"/>
    </location>
    <ligand>
        <name>L-aspartate</name>
        <dbReference type="ChEBI" id="CHEBI:29991"/>
    </ligand>
</feature>
<feature type="binding site" evidence="1">
    <location>
        <position position="135"/>
    </location>
    <ligand>
        <name>L-aspartate</name>
        <dbReference type="ChEBI" id="CHEBI:29991"/>
    </ligand>
</feature>
<feature type="binding site" evidence="1">
    <location>
        <position position="135"/>
    </location>
    <ligand>
        <name>L-citrulline</name>
        <dbReference type="ChEBI" id="CHEBI:57743"/>
    </ligand>
</feature>
<feature type="binding site" evidence="1">
    <location>
        <position position="136"/>
    </location>
    <ligand>
        <name>ATP</name>
        <dbReference type="ChEBI" id="CHEBI:30616"/>
    </ligand>
</feature>
<feature type="binding site" evidence="1">
    <location>
        <position position="136"/>
    </location>
    <ligand>
        <name>L-aspartate</name>
        <dbReference type="ChEBI" id="CHEBI:29991"/>
    </ligand>
</feature>
<feature type="binding site" evidence="1">
    <location>
        <position position="139"/>
    </location>
    <ligand>
        <name>L-citrulline</name>
        <dbReference type="ChEBI" id="CHEBI:57743"/>
    </ligand>
</feature>
<feature type="binding site" evidence="1">
    <location>
        <position position="192"/>
    </location>
    <ligand>
        <name>L-citrulline</name>
        <dbReference type="ChEBI" id="CHEBI:57743"/>
    </ligand>
</feature>
<feature type="binding site" evidence="1">
    <location>
        <position position="194"/>
    </location>
    <ligand>
        <name>ATP</name>
        <dbReference type="ChEBI" id="CHEBI:30616"/>
    </ligand>
</feature>
<feature type="binding site" evidence="1">
    <location>
        <position position="201"/>
    </location>
    <ligand>
        <name>L-citrulline</name>
        <dbReference type="ChEBI" id="CHEBI:57743"/>
    </ligand>
</feature>
<feature type="binding site" evidence="1">
    <location>
        <position position="203"/>
    </location>
    <ligand>
        <name>L-citrulline</name>
        <dbReference type="ChEBI" id="CHEBI:57743"/>
    </ligand>
</feature>
<feature type="binding site" evidence="1">
    <location>
        <position position="280"/>
    </location>
    <ligand>
        <name>L-citrulline</name>
        <dbReference type="ChEBI" id="CHEBI:57743"/>
    </ligand>
</feature>
<comment type="catalytic activity">
    <reaction evidence="1">
        <text>L-citrulline + L-aspartate + ATP = 2-(N(omega)-L-arginino)succinate + AMP + diphosphate + H(+)</text>
        <dbReference type="Rhea" id="RHEA:10932"/>
        <dbReference type="ChEBI" id="CHEBI:15378"/>
        <dbReference type="ChEBI" id="CHEBI:29991"/>
        <dbReference type="ChEBI" id="CHEBI:30616"/>
        <dbReference type="ChEBI" id="CHEBI:33019"/>
        <dbReference type="ChEBI" id="CHEBI:57472"/>
        <dbReference type="ChEBI" id="CHEBI:57743"/>
        <dbReference type="ChEBI" id="CHEBI:456215"/>
        <dbReference type="EC" id="6.3.4.5"/>
    </reaction>
</comment>
<comment type="pathway">
    <text evidence="1">Amino-acid biosynthesis; L-arginine biosynthesis; L-arginine from L-ornithine and carbamoyl phosphate: step 2/3.</text>
</comment>
<comment type="subunit">
    <text evidence="1">Homotetramer.</text>
</comment>
<comment type="subcellular location">
    <subcellularLocation>
        <location evidence="1">Cytoplasm</location>
    </subcellularLocation>
</comment>
<comment type="similarity">
    <text evidence="1">Belongs to the argininosuccinate synthase family. Type 2 subfamily.</text>
</comment>
<reference key="1">
    <citation type="journal article" date="2007" name="J. Bacteriol.">
        <title>Whole-genome analysis of the methyl tert-butyl ether-degrading beta-proteobacterium Methylibium petroleiphilum PM1.</title>
        <authorList>
            <person name="Kane S.R."/>
            <person name="Chakicherla A.Y."/>
            <person name="Chain P.S.G."/>
            <person name="Schmidt R."/>
            <person name="Shin M.W."/>
            <person name="Legler T.C."/>
            <person name="Scow K.M."/>
            <person name="Larimer F.W."/>
            <person name="Lucas S.M."/>
            <person name="Richardson P.M."/>
            <person name="Hristova K.R."/>
        </authorList>
    </citation>
    <scope>NUCLEOTIDE SEQUENCE [LARGE SCALE GENOMIC DNA]</scope>
    <source>
        <strain>ATCC BAA-1232 / LMG 22953 / PM1</strain>
    </source>
</reference>
<sequence length="446" mass="49318">MATILQHLPTGQKVGIAFSGGLDTSAALHWMKLKGALPYAYTAHLGQPDEPDYDEIPRKAMQYGAEKARLIDCRAQLVAEGLAALQAGAFHISTAGVTYFNTTPIGRAVTGTMLVAAMKEDDVHIWGDGSTFKGNDIERFYRYGLLTNPALKIYKPWLDQTFIDELGGRAEMSAFMTQAGFGYKMSAEKAYSTDSNLLGATHEAKDLEHLSSGIRIVNPIMGVAFWRDEVEVKREEVTVRFEEGRPVALNGIEFADPVALLLEANRIGGRHGLGMSDQIENRIIEAKSRGIYEAPGLALLHIAYERLVTGIHNEDTIEQYRDNGRKLGRLLYQGRWFDPQAIMLRETAQRWVARAVTGEVALELRRGNDYSILDTRSPNLTYQPERLSMEKVEDAPFSPADRIGQLTMRNLDIVDTRAKLGIYAKSGLLSLGSGAALARLQNDDPS</sequence>
<accession>A2SK99</accession>
<protein>
    <recommendedName>
        <fullName evidence="1">Argininosuccinate synthase</fullName>
        <ecNumber evidence="1">6.3.4.5</ecNumber>
    </recommendedName>
    <alternativeName>
        <fullName evidence="1">Citrulline--aspartate ligase</fullName>
    </alternativeName>
</protein>
<keyword id="KW-0028">Amino-acid biosynthesis</keyword>
<keyword id="KW-0055">Arginine biosynthesis</keyword>
<keyword id="KW-0067">ATP-binding</keyword>
<keyword id="KW-0963">Cytoplasm</keyword>
<keyword id="KW-0436">Ligase</keyword>
<keyword id="KW-0547">Nucleotide-binding</keyword>
<keyword id="KW-1185">Reference proteome</keyword>